<protein>
    <recommendedName>
        <fullName evidence="1">Alanine--tRNA ligase</fullName>
        <ecNumber evidence="1">6.1.1.7</ecNumber>
    </recommendedName>
    <alternativeName>
        <fullName evidence="1">Alanyl-tRNA synthetase</fullName>
        <shortName evidence="1">AlaRS</shortName>
    </alternativeName>
</protein>
<accession>A8A3H4</accession>
<evidence type="ECO:0000255" key="1">
    <source>
        <dbReference type="HAMAP-Rule" id="MF_00036"/>
    </source>
</evidence>
<dbReference type="EC" id="6.1.1.7" evidence="1"/>
<dbReference type="EMBL" id="CP000802">
    <property type="protein sequence ID" value="ABV07078.1"/>
    <property type="molecule type" value="Genomic_DNA"/>
</dbReference>
<dbReference type="RefSeq" id="WP_000047170.1">
    <property type="nucleotide sequence ID" value="NC_009800.1"/>
</dbReference>
<dbReference type="SMR" id="A8A3H4"/>
<dbReference type="KEGG" id="ecx:EcHS_A2833"/>
<dbReference type="HOGENOM" id="CLU_004485_1_1_6"/>
<dbReference type="GO" id="GO:0005829">
    <property type="term" value="C:cytosol"/>
    <property type="evidence" value="ECO:0007669"/>
    <property type="project" value="TreeGrafter"/>
</dbReference>
<dbReference type="GO" id="GO:0004813">
    <property type="term" value="F:alanine-tRNA ligase activity"/>
    <property type="evidence" value="ECO:0007669"/>
    <property type="project" value="UniProtKB-UniRule"/>
</dbReference>
<dbReference type="GO" id="GO:0002161">
    <property type="term" value="F:aminoacyl-tRNA deacylase activity"/>
    <property type="evidence" value="ECO:0007669"/>
    <property type="project" value="TreeGrafter"/>
</dbReference>
<dbReference type="GO" id="GO:0005524">
    <property type="term" value="F:ATP binding"/>
    <property type="evidence" value="ECO:0007669"/>
    <property type="project" value="UniProtKB-UniRule"/>
</dbReference>
<dbReference type="GO" id="GO:0000049">
    <property type="term" value="F:tRNA binding"/>
    <property type="evidence" value="ECO:0007669"/>
    <property type="project" value="UniProtKB-KW"/>
</dbReference>
<dbReference type="GO" id="GO:0008270">
    <property type="term" value="F:zinc ion binding"/>
    <property type="evidence" value="ECO:0007669"/>
    <property type="project" value="UniProtKB-UniRule"/>
</dbReference>
<dbReference type="GO" id="GO:0006419">
    <property type="term" value="P:alanyl-tRNA aminoacylation"/>
    <property type="evidence" value="ECO:0007669"/>
    <property type="project" value="UniProtKB-UniRule"/>
</dbReference>
<dbReference type="GO" id="GO:0045892">
    <property type="term" value="P:negative regulation of DNA-templated transcription"/>
    <property type="evidence" value="ECO:0007669"/>
    <property type="project" value="TreeGrafter"/>
</dbReference>
<dbReference type="CDD" id="cd00673">
    <property type="entry name" value="AlaRS_core"/>
    <property type="match status" value="1"/>
</dbReference>
<dbReference type="FunFam" id="2.40.30.130:FF:000001">
    <property type="entry name" value="Alanine--tRNA ligase"/>
    <property type="match status" value="1"/>
</dbReference>
<dbReference type="FunFam" id="3.10.310.40:FF:000001">
    <property type="entry name" value="Alanine--tRNA ligase"/>
    <property type="match status" value="1"/>
</dbReference>
<dbReference type="FunFam" id="3.30.54.20:FF:000001">
    <property type="entry name" value="Alanine--tRNA ligase"/>
    <property type="match status" value="1"/>
</dbReference>
<dbReference type="FunFam" id="3.30.930.10:FF:000004">
    <property type="entry name" value="Alanine--tRNA ligase"/>
    <property type="match status" value="1"/>
</dbReference>
<dbReference type="FunFam" id="3.30.980.10:FF:000004">
    <property type="entry name" value="Alanine--tRNA ligase, cytoplasmic"/>
    <property type="match status" value="1"/>
</dbReference>
<dbReference type="Gene3D" id="2.40.30.130">
    <property type="match status" value="1"/>
</dbReference>
<dbReference type="Gene3D" id="3.10.310.40">
    <property type="match status" value="1"/>
</dbReference>
<dbReference type="Gene3D" id="3.30.54.20">
    <property type="match status" value="1"/>
</dbReference>
<dbReference type="Gene3D" id="6.10.250.550">
    <property type="match status" value="1"/>
</dbReference>
<dbReference type="Gene3D" id="3.30.930.10">
    <property type="entry name" value="Bira Bifunctional Protein, Domain 2"/>
    <property type="match status" value="1"/>
</dbReference>
<dbReference type="Gene3D" id="3.30.980.10">
    <property type="entry name" value="Threonyl-trna Synthetase, Chain A, domain 2"/>
    <property type="match status" value="1"/>
</dbReference>
<dbReference type="HAMAP" id="MF_00036_B">
    <property type="entry name" value="Ala_tRNA_synth_B"/>
    <property type="match status" value="1"/>
</dbReference>
<dbReference type="InterPro" id="IPR045864">
    <property type="entry name" value="aa-tRNA-synth_II/BPL/LPL"/>
</dbReference>
<dbReference type="InterPro" id="IPR002318">
    <property type="entry name" value="Ala-tRNA-lgiase_IIc"/>
</dbReference>
<dbReference type="InterPro" id="IPR018162">
    <property type="entry name" value="Ala-tRNA-ligase_IIc_anticod-bd"/>
</dbReference>
<dbReference type="InterPro" id="IPR018165">
    <property type="entry name" value="Ala-tRNA-synth_IIc_core"/>
</dbReference>
<dbReference type="InterPro" id="IPR018164">
    <property type="entry name" value="Ala-tRNA-synth_IIc_N"/>
</dbReference>
<dbReference type="InterPro" id="IPR050058">
    <property type="entry name" value="Ala-tRNA_ligase"/>
</dbReference>
<dbReference type="InterPro" id="IPR023033">
    <property type="entry name" value="Ala_tRNA_ligase_euk/bac"/>
</dbReference>
<dbReference type="InterPro" id="IPR003156">
    <property type="entry name" value="DHHA1_dom"/>
</dbReference>
<dbReference type="InterPro" id="IPR018163">
    <property type="entry name" value="Thr/Ala-tRNA-synth_IIc_edit"/>
</dbReference>
<dbReference type="InterPro" id="IPR009000">
    <property type="entry name" value="Transl_B-barrel_sf"/>
</dbReference>
<dbReference type="InterPro" id="IPR012947">
    <property type="entry name" value="tRNA_SAD"/>
</dbReference>
<dbReference type="NCBIfam" id="TIGR00344">
    <property type="entry name" value="alaS"/>
    <property type="match status" value="1"/>
</dbReference>
<dbReference type="PANTHER" id="PTHR11777:SF9">
    <property type="entry name" value="ALANINE--TRNA LIGASE, CYTOPLASMIC"/>
    <property type="match status" value="1"/>
</dbReference>
<dbReference type="PANTHER" id="PTHR11777">
    <property type="entry name" value="ALANYL-TRNA SYNTHETASE"/>
    <property type="match status" value="1"/>
</dbReference>
<dbReference type="Pfam" id="PF02272">
    <property type="entry name" value="DHHA1"/>
    <property type="match status" value="1"/>
</dbReference>
<dbReference type="Pfam" id="PF01411">
    <property type="entry name" value="tRNA-synt_2c"/>
    <property type="match status" value="1"/>
</dbReference>
<dbReference type="Pfam" id="PF07973">
    <property type="entry name" value="tRNA_SAD"/>
    <property type="match status" value="1"/>
</dbReference>
<dbReference type="PRINTS" id="PR00980">
    <property type="entry name" value="TRNASYNTHALA"/>
</dbReference>
<dbReference type="SMART" id="SM00863">
    <property type="entry name" value="tRNA_SAD"/>
    <property type="match status" value="1"/>
</dbReference>
<dbReference type="SUPFAM" id="SSF55681">
    <property type="entry name" value="Class II aaRS and biotin synthetases"/>
    <property type="match status" value="1"/>
</dbReference>
<dbReference type="SUPFAM" id="SSF101353">
    <property type="entry name" value="Putative anticodon-binding domain of alanyl-tRNA synthetase (AlaRS)"/>
    <property type="match status" value="1"/>
</dbReference>
<dbReference type="SUPFAM" id="SSF55186">
    <property type="entry name" value="ThrRS/AlaRS common domain"/>
    <property type="match status" value="1"/>
</dbReference>
<dbReference type="SUPFAM" id="SSF50447">
    <property type="entry name" value="Translation proteins"/>
    <property type="match status" value="1"/>
</dbReference>
<dbReference type="PROSITE" id="PS50860">
    <property type="entry name" value="AA_TRNA_LIGASE_II_ALA"/>
    <property type="match status" value="1"/>
</dbReference>
<gene>
    <name evidence="1" type="primary">alaS</name>
    <name type="ordered locus">EcHS_A2833</name>
</gene>
<name>SYA_ECOHS</name>
<keyword id="KW-0007">Acetylation</keyword>
<keyword id="KW-0030">Aminoacyl-tRNA synthetase</keyword>
<keyword id="KW-0067">ATP-binding</keyword>
<keyword id="KW-0963">Cytoplasm</keyword>
<keyword id="KW-0436">Ligase</keyword>
<keyword id="KW-0479">Metal-binding</keyword>
<keyword id="KW-0547">Nucleotide-binding</keyword>
<keyword id="KW-0648">Protein biosynthesis</keyword>
<keyword id="KW-0694">RNA-binding</keyword>
<keyword id="KW-0820">tRNA-binding</keyword>
<keyword id="KW-0862">Zinc</keyword>
<feature type="chain" id="PRO_0000347603" description="Alanine--tRNA ligase">
    <location>
        <begin position="1"/>
        <end position="876"/>
    </location>
</feature>
<feature type="binding site" evidence="1">
    <location>
        <position position="564"/>
    </location>
    <ligand>
        <name>Zn(2+)</name>
        <dbReference type="ChEBI" id="CHEBI:29105"/>
    </ligand>
</feature>
<feature type="binding site" evidence="1">
    <location>
        <position position="568"/>
    </location>
    <ligand>
        <name>Zn(2+)</name>
        <dbReference type="ChEBI" id="CHEBI:29105"/>
    </ligand>
</feature>
<feature type="binding site" evidence="1">
    <location>
        <position position="666"/>
    </location>
    <ligand>
        <name>Zn(2+)</name>
        <dbReference type="ChEBI" id="CHEBI:29105"/>
    </ligand>
</feature>
<feature type="binding site" evidence="1">
    <location>
        <position position="670"/>
    </location>
    <ligand>
        <name>Zn(2+)</name>
        <dbReference type="ChEBI" id="CHEBI:29105"/>
    </ligand>
</feature>
<feature type="modified residue" description="N6-acetyllysine" evidence="1">
    <location>
        <position position="74"/>
    </location>
</feature>
<comment type="function">
    <text evidence="1">Catalyzes the attachment of alanine to tRNA(Ala) in a two-step reaction: alanine is first activated by ATP to form Ala-AMP and then transferred to the acceptor end of tRNA(Ala). Also edits incorrectly charged Ser-tRNA(Ala) and Gly-tRNA(Ala) via its editing domain.</text>
</comment>
<comment type="catalytic activity">
    <reaction evidence="1">
        <text>tRNA(Ala) + L-alanine + ATP = L-alanyl-tRNA(Ala) + AMP + diphosphate</text>
        <dbReference type="Rhea" id="RHEA:12540"/>
        <dbReference type="Rhea" id="RHEA-COMP:9657"/>
        <dbReference type="Rhea" id="RHEA-COMP:9923"/>
        <dbReference type="ChEBI" id="CHEBI:30616"/>
        <dbReference type="ChEBI" id="CHEBI:33019"/>
        <dbReference type="ChEBI" id="CHEBI:57972"/>
        <dbReference type="ChEBI" id="CHEBI:78442"/>
        <dbReference type="ChEBI" id="CHEBI:78497"/>
        <dbReference type="ChEBI" id="CHEBI:456215"/>
        <dbReference type="EC" id="6.1.1.7"/>
    </reaction>
</comment>
<comment type="cofactor">
    <cofactor evidence="1">
        <name>Zn(2+)</name>
        <dbReference type="ChEBI" id="CHEBI:29105"/>
    </cofactor>
    <text evidence="1">Binds 1 zinc ion per subunit.</text>
</comment>
<comment type="subunit">
    <text evidence="1">Homotetramer.</text>
</comment>
<comment type="subcellular location">
    <subcellularLocation>
        <location evidence="1">Cytoplasm</location>
    </subcellularLocation>
</comment>
<comment type="domain">
    <text evidence="1">Consists of three domains; the N-terminal catalytic domain, the editing domain and the C-terminal C-Ala domain. The editing domain removes incorrectly charged amino acids, while the C-Ala domain, along with tRNA(Ala), serves as a bridge to cooperatively bring together the editing and aminoacylation centers thus stimulating deacylation of misacylated tRNAs.</text>
</comment>
<comment type="similarity">
    <text evidence="1">Belongs to the class-II aminoacyl-tRNA synthetase family.</text>
</comment>
<organism>
    <name type="scientific">Escherichia coli O9:H4 (strain HS)</name>
    <dbReference type="NCBI Taxonomy" id="331112"/>
    <lineage>
        <taxon>Bacteria</taxon>
        <taxon>Pseudomonadati</taxon>
        <taxon>Pseudomonadota</taxon>
        <taxon>Gammaproteobacteria</taxon>
        <taxon>Enterobacterales</taxon>
        <taxon>Enterobacteriaceae</taxon>
        <taxon>Escherichia</taxon>
    </lineage>
</organism>
<proteinExistence type="inferred from homology"/>
<reference key="1">
    <citation type="journal article" date="2008" name="J. Bacteriol.">
        <title>The pangenome structure of Escherichia coli: comparative genomic analysis of E. coli commensal and pathogenic isolates.</title>
        <authorList>
            <person name="Rasko D.A."/>
            <person name="Rosovitz M.J."/>
            <person name="Myers G.S.A."/>
            <person name="Mongodin E.F."/>
            <person name="Fricke W.F."/>
            <person name="Gajer P."/>
            <person name="Crabtree J."/>
            <person name="Sebaihia M."/>
            <person name="Thomson N.R."/>
            <person name="Chaudhuri R."/>
            <person name="Henderson I.R."/>
            <person name="Sperandio V."/>
            <person name="Ravel J."/>
        </authorList>
    </citation>
    <scope>NUCLEOTIDE SEQUENCE [LARGE SCALE GENOMIC DNA]</scope>
    <source>
        <strain>HS</strain>
    </source>
</reference>
<sequence length="876" mass="95974">MSKSTAEIRQAFLDFFHSKGHQVVASSSLVPHNDPTLLFTNAGMNQFKDVFLGLDKRNYSRATTSQRCVRAGGKHNDLENVGYTARHHTFFEMLGNFSFGDYFKHDAIQFAWELLTSEKWFALPKERLWVTVYESDDEAYEIWEKEVGIPRERIIRIGDNKGAPYASDNFWQMGDTGPCGPCTEIFYDHGDHIWGGPPGSPEEDGDRYIEIWNIVFMQFNRQADGTMEPLPKPSVDTGMGLERIAAVLQHVNSNYDIDLFRTLIQAVAKVTGATDLSNKSLRVIADHIRSCAFLIADGVMPSNENRGYVLRRIIRRAVRHGNMLGAKETFFYKLVGPLIDVMGSAGEDLKRQQAQVEQVLKTEEEQFARTLERGLALLDEELAKLSGDTLDGETAFRLYDTYGFPVDLTADVCRERNIKVDEAGFEAAMEEQRRRAREASGFGADYNAMIRVDSASEFKGYDHLELNGKVTALFVDGKAVDAINAGQEAVVVLDQTPFYAESGGQVGDKGELKGANFSFAVEDTQKYGQAIGHIGKLAAGSLKVGDAVQADVDEARRARIRLNHSATHLMHAALRQVLGTHVSQKGSLVNDKVLRFDFSHNEAMKPEEIRAVEDLVNAQIRRNLPIETNIMDLEAAKAKGAMALFGEKYDERVRVLSMGDFSTELCGGTHASRTGDIGLFRIISESGTAAGVRRIEAVTGEGAIATVHADSDRLSEVAHLLKGDSNNLADKVRSVLERTRQLEKELQQLKEQAAAQESANLSSKAIDVNGVKLLVSELSGVEPKMLRTMVDDLKNQLGSTIIVLATVAEGKVSLIAGVSKDVTDRVKAGELIGMVAQQVGGKGGGRPDMAQAGGTDAAALPAALASVKGWVSAKLQ</sequence>